<keyword id="KW-1003">Cell membrane</keyword>
<keyword id="KW-0472">Membrane</keyword>
<keyword id="KW-1185">Reference proteome</keyword>
<keyword id="KW-0812">Transmembrane</keyword>
<keyword id="KW-1133">Transmembrane helix</keyword>
<comment type="subcellular location">
    <subcellularLocation>
        <location evidence="2">Cell membrane</location>
        <topology evidence="2">Multi-pass membrane protein</topology>
    </subcellularLocation>
</comment>
<proteinExistence type="predicted"/>
<organism>
    <name type="scientific">Archaeoglobus fulgidus (strain ATCC 49558 / DSM 4304 / JCM 9628 / NBRC 100126 / VC-16)</name>
    <dbReference type="NCBI Taxonomy" id="224325"/>
    <lineage>
        <taxon>Archaea</taxon>
        <taxon>Methanobacteriati</taxon>
        <taxon>Methanobacteriota</taxon>
        <taxon>Archaeoglobi</taxon>
        <taxon>Archaeoglobales</taxon>
        <taxon>Archaeoglobaceae</taxon>
        <taxon>Archaeoglobus</taxon>
    </lineage>
</organism>
<reference key="1">
    <citation type="journal article" date="1997" name="Nature">
        <title>The complete genome sequence of the hyperthermophilic, sulphate-reducing archaeon Archaeoglobus fulgidus.</title>
        <authorList>
            <person name="Klenk H.-P."/>
            <person name="Clayton R.A."/>
            <person name="Tomb J.-F."/>
            <person name="White O."/>
            <person name="Nelson K.E."/>
            <person name="Ketchum K.A."/>
            <person name="Dodson R.J."/>
            <person name="Gwinn M.L."/>
            <person name="Hickey E.K."/>
            <person name="Peterson J.D."/>
            <person name="Richardson D.L."/>
            <person name="Kerlavage A.R."/>
            <person name="Graham D.E."/>
            <person name="Kyrpides N.C."/>
            <person name="Fleischmann R.D."/>
            <person name="Quackenbush J."/>
            <person name="Lee N.H."/>
            <person name="Sutton G.G."/>
            <person name="Gill S.R."/>
            <person name="Kirkness E.F."/>
            <person name="Dougherty B.A."/>
            <person name="McKenney K."/>
            <person name="Adams M.D."/>
            <person name="Loftus B.J."/>
            <person name="Peterson S.N."/>
            <person name="Reich C.I."/>
            <person name="McNeil L.K."/>
            <person name="Badger J.H."/>
            <person name="Glodek A."/>
            <person name="Zhou L."/>
            <person name="Overbeek R."/>
            <person name="Gocayne J.D."/>
            <person name="Weidman J.F."/>
            <person name="McDonald L.A."/>
            <person name="Utterback T.R."/>
            <person name="Cotton M.D."/>
            <person name="Spriggs T."/>
            <person name="Artiach P."/>
            <person name="Kaine B.P."/>
            <person name="Sykes S.M."/>
            <person name="Sadow P.W."/>
            <person name="D'Andrea K.P."/>
            <person name="Bowman C."/>
            <person name="Fujii C."/>
            <person name="Garland S.A."/>
            <person name="Mason T.M."/>
            <person name="Olsen G.J."/>
            <person name="Fraser C.M."/>
            <person name="Smith H.O."/>
            <person name="Woese C.R."/>
            <person name="Venter J.C."/>
        </authorList>
    </citation>
    <scope>NUCLEOTIDE SEQUENCE [LARGE SCALE GENOMIC DNA]</scope>
    <source>
        <strain>ATCC 49558 / DSM 4304 / JCM 9628 / NBRC 100126 / VC-16</strain>
    </source>
</reference>
<evidence type="ECO:0000255" key="1"/>
<evidence type="ECO:0000305" key="2"/>
<accession>O28452</accession>
<gene>
    <name type="ordered locus">AF_1823</name>
</gene>
<dbReference type="EMBL" id="AE000782">
    <property type="protein sequence ID" value="AAB89426.1"/>
    <property type="molecule type" value="Genomic_DNA"/>
</dbReference>
<dbReference type="PIR" id="F69477">
    <property type="entry name" value="F69477"/>
</dbReference>
<dbReference type="RefSeq" id="WP_010879318.1">
    <property type="nucleotide sequence ID" value="NC_000917.1"/>
</dbReference>
<dbReference type="SMR" id="O28452"/>
<dbReference type="STRING" id="224325.AF_1823"/>
<dbReference type="PaxDb" id="224325-AF_1823"/>
<dbReference type="EnsemblBacteria" id="AAB89426">
    <property type="protein sequence ID" value="AAB89426"/>
    <property type="gene ID" value="AF_1823"/>
</dbReference>
<dbReference type="KEGG" id="afu:AF_1823"/>
<dbReference type="eggNOG" id="arCOG10166">
    <property type="taxonomic scope" value="Archaea"/>
</dbReference>
<dbReference type="HOGENOM" id="CLU_143261_0_0_2"/>
<dbReference type="OrthoDB" id="51682at2157"/>
<dbReference type="Proteomes" id="UP000002199">
    <property type="component" value="Chromosome"/>
</dbReference>
<dbReference type="GO" id="GO:0005886">
    <property type="term" value="C:plasma membrane"/>
    <property type="evidence" value="ECO:0007669"/>
    <property type="project" value="UniProtKB-SubCell"/>
</dbReference>
<name>Y1823_ARCFU</name>
<sequence length="154" mass="16504">MNIDTLIIAVAGLFAVASSIGVLLTKDNFYAALYMSVTMLFVAAIYAAFNIQPVVVIIALIFVGAVGIVTVAIAATYRAGVSRKVNIFWVVPVIVVFAILALAYASMAVESIEVVNPEVFSAVATDYFFVVAFLFTLVVLMMLSAIKLARRVDL</sequence>
<feature type="chain" id="PRO_0000128060" description="Uncharacterized protein AF_1823">
    <location>
        <begin position="1"/>
        <end position="154"/>
    </location>
</feature>
<feature type="transmembrane region" description="Helical" evidence="1">
    <location>
        <begin position="5"/>
        <end position="24"/>
    </location>
</feature>
<feature type="transmembrane region" description="Helical" evidence="1">
    <location>
        <begin position="29"/>
        <end position="48"/>
    </location>
</feature>
<feature type="transmembrane region" description="Helical" evidence="1">
    <location>
        <begin position="53"/>
        <end position="75"/>
    </location>
</feature>
<feature type="transmembrane region" description="Helical" evidence="1">
    <location>
        <begin position="87"/>
        <end position="109"/>
    </location>
</feature>
<feature type="transmembrane region" description="Helical" evidence="1">
    <location>
        <begin position="124"/>
        <end position="146"/>
    </location>
</feature>
<protein>
    <recommendedName>
        <fullName>Uncharacterized protein AF_1823</fullName>
    </recommendedName>
</protein>